<feature type="chain" id="PRO_1000084723" description="Probable tRNA pseudouridine synthase B">
    <location>
        <begin position="1"/>
        <end position="333"/>
    </location>
</feature>
<feature type="domain" description="PUA" evidence="1">
    <location>
        <begin position="233"/>
        <end position="308"/>
    </location>
</feature>
<feature type="active site" description="Nucleophile" evidence="1">
    <location>
        <position position="66"/>
    </location>
</feature>
<organism>
    <name type="scientific">Methanococcus maripaludis (strain C7 / ATCC BAA-1331)</name>
    <dbReference type="NCBI Taxonomy" id="426368"/>
    <lineage>
        <taxon>Archaea</taxon>
        <taxon>Methanobacteriati</taxon>
        <taxon>Methanobacteriota</taxon>
        <taxon>Methanomada group</taxon>
        <taxon>Methanococci</taxon>
        <taxon>Methanococcales</taxon>
        <taxon>Methanococcaceae</taxon>
        <taxon>Methanococcus</taxon>
    </lineage>
</organism>
<reference key="1">
    <citation type="submission" date="2007-06" db="EMBL/GenBank/DDBJ databases">
        <title>Complete sequence of Methanococcus maripaludis C7.</title>
        <authorList>
            <consortium name="US DOE Joint Genome Institute"/>
            <person name="Copeland A."/>
            <person name="Lucas S."/>
            <person name="Lapidus A."/>
            <person name="Barry K."/>
            <person name="Glavina del Rio T."/>
            <person name="Dalin E."/>
            <person name="Tice H."/>
            <person name="Pitluck S."/>
            <person name="Clum A."/>
            <person name="Schmutz J."/>
            <person name="Larimer F."/>
            <person name="Land M."/>
            <person name="Hauser L."/>
            <person name="Kyrpides N."/>
            <person name="Anderson I."/>
            <person name="Sieprawska-Lupa M."/>
            <person name="Whitman W.B."/>
            <person name="Richardson P."/>
        </authorList>
    </citation>
    <scope>NUCLEOTIDE SEQUENCE [LARGE SCALE GENOMIC DNA]</scope>
    <source>
        <strain>C7 / ATCC BAA-1331</strain>
    </source>
</reference>
<accession>A6VHV2</accession>
<name>TRUB_METM7</name>
<evidence type="ECO:0000255" key="1">
    <source>
        <dbReference type="HAMAP-Rule" id="MF_01081"/>
    </source>
</evidence>
<keyword id="KW-0413">Isomerase</keyword>
<keyword id="KW-0819">tRNA processing</keyword>
<proteinExistence type="inferred from homology"/>
<dbReference type="EC" id="5.4.99.25" evidence="1"/>
<dbReference type="EMBL" id="CP000745">
    <property type="protein sequence ID" value="ABR66028.1"/>
    <property type="molecule type" value="Genomic_DNA"/>
</dbReference>
<dbReference type="SMR" id="A6VHV2"/>
<dbReference type="STRING" id="426368.MmarC7_0961"/>
<dbReference type="KEGG" id="mmz:MmarC7_0961"/>
<dbReference type="eggNOG" id="arCOG00987">
    <property type="taxonomic scope" value="Archaea"/>
</dbReference>
<dbReference type="HOGENOM" id="CLU_032087_3_0_2"/>
<dbReference type="OrthoDB" id="35866at2157"/>
<dbReference type="GO" id="GO:0003723">
    <property type="term" value="F:RNA binding"/>
    <property type="evidence" value="ECO:0007669"/>
    <property type="project" value="InterPro"/>
</dbReference>
<dbReference type="GO" id="GO:0160148">
    <property type="term" value="F:tRNA pseudouridine(55) synthase activity"/>
    <property type="evidence" value="ECO:0007669"/>
    <property type="project" value="UniProtKB-EC"/>
</dbReference>
<dbReference type="GO" id="GO:0000495">
    <property type="term" value="P:box H/ACA sno(s)RNA 3'-end processing"/>
    <property type="evidence" value="ECO:0007669"/>
    <property type="project" value="TreeGrafter"/>
</dbReference>
<dbReference type="GO" id="GO:1990481">
    <property type="term" value="P:mRNA pseudouridine synthesis"/>
    <property type="evidence" value="ECO:0007669"/>
    <property type="project" value="TreeGrafter"/>
</dbReference>
<dbReference type="GO" id="GO:0031118">
    <property type="term" value="P:rRNA pseudouridine synthesis"/>
    <property type="evidence" value="ECO:0007669"/>
    <property type="project" value="TreeGrafter"/>
</dbReference>
<dbReference type="GO" id="GO:0031120">
    <property type="term" value="P:snRNA pseudouridine synthesis"/>
    <property type="evidence" value="ECO:0007669"/>
    <property type="project" value="TreeGrafter"/>
</dbReference>
<dbReference type="GO" id="GO:0031119">
    <property type="term" value="P:tRNA pseudouridine synthesis"/>
    <property type="evidence" value="ECO:0007669"/>
    <property type="project" value="UniProtKB-UniRule"/>
</dbReference>
<dbReference type="CDD" id="cd02572">
    <property type="entry name" value="PseudoU_synth_hDyskerin"/>
    <property type="match status" value="1"/>
</dbReference>
<dbReference type="CDD" id="cd21148">
    <property type="entry name" value="PUA_Cbf5"/>
    <property type="match status" value="1"/>
</dbReference>
<dbReference type="FunFam" id="3.30.2350.10:FF:000001">
    <property type="entry name" value="H/ACA ribonucleoprotein complex subunit CBF5"/>
    <property type="match status" value="1"/>
</dbReference>
<dbReference type="Gene3D" id="3.30.2350.10">
    <property type="entry name" value="Pseudouridine synthase"/>
    <property type="match status" value="1"/>
</dbReference>
<dbReference type="Gene3D" id="2.30.130.10">
    <property type="entry name" value="PUA domain"/>
    <property type="match status" value="1"/>
</dbReference>
<dbReference type="HAMAP" id="MF_01081">
    <property type="entry name" value="TruB_arch"/>
    <property type="match status" value="1"/>
</dbReference>
<dbReference type="InterPro" id="IPR012960">
    <property type="entry name" value="Dyskerin-like"/>
</dbReference>
<dbReference type="InterPro" id="IPR020103">
    <property type="entry name" value="PsdUridine_synth_cat_dom_sf"/>
</dbReference>
<dbReference type="InterPro" id="IPR002501">
    <property type="entry name" value="PsdUridine_synth_N"/>
</dbReference>
<dbReference type="InterPro" id="IPR002478">
    <property type="entry name" value="PUA"/>
</dbReference>
<dbReference type="InterPro" id="IPR015947">
    <property type="entry name" value="PUA-like_sf"/>
</dbReference>
<dbReference type="InterPro" id="IPR036974">
    <property type="entry name" value="PUA_sf"/>
</dbReference>
<dbReference type="InterPro" id="IPR004802">
    <property type="entry name" value="tRNA_PsdUridine_synth_B_fam"/>
</dbReference>
<dbReference type="InterPro" id="IPR026326">
    <property type="entry name" value="TruB_arch"/>
</dbReference>
<dbReference type="InterPro" id="IPR032819">
    <property type="entry name" value="TruB_C"/>
</dbReference>
<dbReference type="InterPro" id="IPR004521">
    <property type="entry name" value="Uncharacterised_CHP00451"/>
</dbReference>
<dbReference type="NCBIfam" id="TIGR00425">
    <property type="entry name" value="CBF5"/>
    <property type="match status" value="1"/>
</dbReference>
<dbReference type="NCBIfam" id="NF003280">
    <property type="entry name" value="PRK04270.1"/>
    <property type="match status" value="1"/>
</dbReference>
<dbReference type="NCBIfam" id="TIGR00451">
    <property type="entry name" value="unchar_dom_2"/>
    <property type="match status" value="1"/>
</dbReference>
<dbReference type="PANTHER" id="PTHR23127">
    <property type="entry name" value="CENTROMERE/MICROTUBULE BINDING PROTEIN CBF5"/>
    <property type="match status" value="1"/>
</dbReference>
<dbReference type="PANTHER" id="PTHR23127:SF0">
    <property type="entry name" value="H_ACA RIBONUCLEOPROTEIN COMPLEX SUBUNIT DKC1"/>
    <property type="match status" value="1"/>
</dbReference>
<dbReference type="Pfam" id="PF08068">
    <property type="entry name" value="DKCLD"/>
    <property type="match status" value="1"/>
</dbReference>
<dbReference type="Pfam" id="PF01472">
    <property type="entry name" value="PUA"/>
    <property type="match status" value="1"/>
</dbReference>
<dbReference type="Pfam" id="PF16198">
    <property type="entry name" value="TruB_C_2"/>
    <property type="match status" value="1"/>
</dbReference>
<dbReference type="Pfam" id="PF01509">
    <property type="entry name" value="TruB_N"/>
    <property type="match status" value="1"/>
</dbReference>
<dbReference type="SMART" id="SM01136">
    <property type="entry name" value="DKCLD"/>
    <property type="match status" value="1"/>
</dbReference>
<dbReference type="SMART" id="SM00359">
    <property type="entry name" value="PUA"/>
    <property type="match status" value="1"/>
</dbReference>
<dbReference type="SUPFAM" id="SSF55120">
    <property type="entry name" value="Pseudouridine synthase"/>
    <property type="match status" value="1"/>
</dbReference>
<dbReference type="SUPFAM" id="SSF88697">
    <property type="entry name" value="PUA domain-like"/>
    <property type="match status" value="1"/>
</dbReference>
<dbReference type="PROSITE" id="PS50890">
    <property type="entry name" value="PUA"/>
    <property type="match status" value="1"/>
</dbReference>
<comment type="function">
    <text evidence="1">Could be responsible for synthesis of pseudouridine from uracil-55 in the psi GC loop of transfer RNAs.</text>
</comment>
<comment type="catalytic activity">
    <reaction evidence="1">
        <text>uridine(55) in tRNA = pseudouridine(55) in tRNA</text>
        <dbReference type="Rhea" id="RHEA:42532"/>
        <dbReference type="Rhea" id="RHEA-COMP:10101"/>
        <dbReference type="Rhea" id="RHEA-COMP:10102"/>
        <dbReference type="ChEBI" id="CHEBI:65314"/>
        <dbReference type="ChEBI" id="CHEBI:65315"/>
        <dbReference type="EC" id="5.4.99.25"/>
    </reaction>
</comment>
<comment type="similarity">
    <text evidence="1">Belongs to the pseudouridine synthase TruB family. Type 2 subfamily.</text>
</comment>
<sequence>MELIVKEESKTDYNYGSDPYKRDIKTLLNTGLVVIDKPSGPTSHEVAAWVRNMLNLVKAGHGGTLDPKVTGALPVALGNTTKCVPIWHIPPKEYVCLMHLHDDAKLEDIENIFKEFTGRIHQRPPLKAAVKRSLRIRKIYEIEILEIDGRDILFRTKCQSGTYLRKLVDDMGEALGTSAHMQELRRTISGPFYENEAVYLQDLLDAYIFWKEDGNEEELRKLVKPLEYGLQHLKKIIVKDSAVDAVCHGATLYSSGVSKIEKGIGTDEVVLIETLKGEAVAVGKPLMNTKDMLKTEEGEVVEITRVIMEPGIYPRIWKKRNKNDKTKAESKKK</sequence>
<gene>
    <name evidence="1" type="primary">truB</name>
    <name type="ordered locus">MmarC7_0961</name>
</gene>
<protein>
    <recommendedName>
        <fullName evidence="1">Probable tRNA pseudouridine synthase B</fullName>
        <ecNumber evidence="1">5.4.99.25</ecNumber>
    </recommendedName>
    <alternativeName>
        <fullName evidence="1">tRNA pseudouridine(55) synthase</fullName>
        <shortName evidence="1">Psi55 synthase</shortName>
    </alternativeName>
    <alternativeName>
        <fullName evidence="1">tRNA pseudouridylate synthase</fullName>
    </alternativeName>
    <alternativeName>
        <fullName evidence="1">tRNA-uridine isomerase</fullName>
    </alternativeName>
</protein>